<reference key="1">
    <citation type="journal article" date="2010" name="Genome Biol.">
        <title>Structure and dynamics of the pan-genome of Streptococcus pneumoniae and closely related species.</title>
        <authorList>
            <person name="Donati C."/>
            <person name="Hiller N.L."/>
            <person name="Tettelin H."/>
            <person name="Muzzi A."/>
            <person name="Croucher N.J."/>
            <person name="Angiuoli S.V."/>
            <person name="Oggioni M."/>
            <person name="Dunning Hotopp J.C."/>
            <person name="Hu F.Z."/>
            <person name="Riley D.R."/>
            <person name="Covacci A."/>
            <person name="Mitchell T.J."/>
            <person name="Bentley S.D."/>
            <person name="Kilian M."/>
            <person name="Ehrlich G.D."/>
            <person name="Rappuoli R."/>
            <person name="Moxon E.R."/>
            <person name="Masignani V."/>
        </authorList>
    </citation>
    <scope>NUCLEOTIDE SEQUENCE [LARGE SCALE GENOMIC DNA]</scope>
    <source>
        <strain>P1031</strain>
    </source>
</reference>
<accession>C1CIB8</accession>
<gene>
    <name evidence="1" type="primary">adk</name>
    <name type="ordered locus">SPP_0281</name>
</gene>
<sequence>MNLLIMGLPGAGKGTQAAKIVEQFHVAHISTGDMFRAAMANQTEMGVLAKSYIDKGELVPDEVTNGIVKERLSQDDIKETGFLLDGYPRTIEQAHALDKTLAELGIELEGIINIEVNPDSLLERLSGRIIHRVTGETFHKVFNPPVDYKEEDYYQREDDKPETVKRRLDVNIAQGEPIIAHYRAKGLVHDIEGNQDINDVFSDIEKVLTNLK</sequence>
<organism>
    <name type="scientific">Streptococcus pneumoniae (strain P1031)</name>
    <dbReference type="NCBI Taxonomy" id="488223"/>
    <lineage>
        <taxon>Bacteria</taxon>
        <taxon>Bacillati</taxon>
        <taxon>Bacillota</taxon>
        <taxon>Bacilli</taxon>
        <taxon>Lactobacillales</taxon>
        <taxon>Streptococcaceae</taxon>
        <taxon>Streptococcus</taxon>
    </lineage>
</organism>
<name>KAD_STRZP</name>
<comment type="function">
    <text evidence="1">Catalyzes the reversible transfer of the terminal phosphate group between ATP and AMP. Plays an important role in cellular energy homeostasis and in adenine nucleotide metabolism.</text>
</comment>
<comment type="catalytic activity">
    <reaction evidence="1">
        <text>AMP + ATP = 2 ADP</text>
        <dbReference type="Rhea" id="RHEA:12973"/>
        <dbReference type="ChEBI" id="CHEBI:30616"/>
        <dbReference type="ChEBI" id="CHEBI:456215"/>
        <dbReference type="ChEBI" id="CHEBI:456216"/>
        <dbReference type="EC" id="2.7.4.3"/>
    </reaction>
</comment>
<comment type="pathway">
    <text evidence="1">Purine metabolism; AMP biosynthesis via salvage pathway; AMP from ADP: step 1/1.</text>
</comment>
<comment type="subunit">
    <text evidence="1">Monomer.</text>
</comment>
<comment type="subcellular location">
    <subcellularLocation>
        <location evidence="1">Cytoplasm</location>
    </subcellularLocation>
</comment>
<comment type="domain">
    <text evidence="1">Consists of three domains, a large central CORE domain and two small peripheral domains, NMPbind and LID, which undergo movements during catalysis. The LID domain closes over the site of phosphoryl transfer upon ATP binding. Assembling and dissambling the active center during each catalytic cycle provides an effective means to prevent ATP hydrolysis.</text>
</comment>
<comment type="similarity">
    <text evidence="1">Belongs to the adenylate kinase family.</text>
</comment>
<feature type="chain" id="PRO_1000125167" description="Adenylate kinase">
    <location>
        <begin position="1"/>
        <end position="212"/>
    </location>
</feature>
<feature type="region of interest" description="NMP" evidence="1">
    <location>
        <begin position="30"/>
        <end position="59"/>
    </location>
</feature>
<feature type="region of interest" description="LID" evidence="1">
    <location>
        <begin position="127"/>
        <end position="159"/>
    </location>
</feature>
<feature type="binding site" evidence="1">
    <location>
        <begin position="10"/>
        <end position="15"/>
    </location>
    <ligand>
        <name>ATP</name>
        <dbReference type="ChEBI" id="CHEBI:30616"/>
    </ligand>
</feature>
<feature type="binding site" evidence="1">
    <location>
        <position position="31"/>
    </location>
    <ligand>
        <name>AMP</name>
        <dbReference type="ChEBI" id="CHEBI:456215"/>
    </ligand>
</feature>
<feature type="binding site" evidence="1">
    <location>
        <position position="36"/>
    </location>
    <ligand>
        <name>AMP</name>
        <dbReference type="ChEBI" id="CHEBI:456215"/>
    </ligand>
</feature>
<feature type="binding site" evidence="1">
    <location>
        <begin position="57"/>
        <end position="59"/>
    </location>
    <ligand>
        <name>AMP</name>
        <dbReference type="ChEBI" id="CHEBI:456215"/>
    </ligand>
</feature>
<feature type="binding site" evidence="1">
    <location>
        <begin position="86"/>
        <end position="89"/>
    </location>
    <ligand>
        <name>AMP</name>
        <dbReference type="ChEBI" id="CHEBI:456215"/>
    </ligand>
</feature>
<feature type="binding site" evidence="1">
    <location>
        <position position="93"/>
    </location>
    <ligand>
        <name>AMP</name>
        <dbReference type="ChEBI" id="CHEBI:456215"/>
    </ligand>
</feature>
<feature type="binding site" evidence="1">
    <location>
        <position position="128"/>
    </location>
    <ligand>
        <name>ATP</name>
        <dbReference type="ChEBI" id="CHEBI:30616"/>
    </ligand>
</feature>
<feature type="binding site" evidence="1">
    <location>
        <begin position="137"/>
        <end position="138"/>
    </location>
    <ligand>
        <name>ATP</name>
        <dbReference type="ChEBI" id="CHEBI:30616"/>
    </ligand>
</feature>
<feature type="binding site" evidence="1">
    <location>
        <position position="156"/>
    </location>
    <ligand>
        <name>AMP</name>
        <dbReference type="ChEBI" id="CHEBI:456215"/>
    </ligand>
</feature>
<feature type="binding site" evidence="1">
    <location>
        <position position="167"/>
    </location>
    <ligand>
        <name>AMP</name>
        <dbReference type="ChEBI" id="CHEBI:456215"/>
    </ligand>
</feature>
<feature type="binding site" evidence="1">
    <location>
        <position position="195"/>
    </location>
    <ligand>
        <name>ATP</name>
        <dbReference type="ChEBI" id="CHEBI:30616"/>
    </ligand>
</feature>
<evidence type="ECO:0000255" key="1">
    <source>
        <dbReference type="HAMAP-Rule" id="MF_00235"/>
    </source>
</evidence>
<proteinExistence type="inferred from homology"/>
<protein>
    <recommendedName>
        <fullName evidence="1">Adenylate kinase</fullName>
        <shortName evidence="1">AK</shortName>
        <ecNumber evidence="1">2.7.4.3</ecNumber>
    </recommendedName>
    <alternativeName>
        <fullName evidence="1">ATP-AMP transphosphorylase</fullName>
    </alternativeName>
    <alternativeName>
        <fullName evidence="1">ATP:AMP phosphotransferase</fullName>
    </alternativeName>
    <alternativeName>
        <fullName evidence="1">Adenylate monophosphate kinase</fullName>
    </alternativeName>
</protein>
<keyword id="KW-0067">ATP-binding</keyword>
<keyword id="KW-0963">Cytoplasm</keyword>
<keyword id="KW-0418">Kinase</keyword>
<keyword id="KW-0545">Nucleotide biosynthesis</keyword>
<keyword id="KW-0547">Nucleotide-binding</keyword>
<keyword id="KW-0808">Transferase</keyword>
<dbReference type="EC" id="2.7.4.3" evidence="1"/>
<dbReference type="EMBL" id="CP000920">
    <property type="protein sequence ID" value="ACO20606.1"/>
    <property type="molecule type" value="Genomic_DNA"/>
</dbReference>
<dbReference type="RefSeq" id="WP_001050431.1">
    <property type="nucleotide sequence ID" value="NC_012467.1"/>
</dbReference>
<dbReference type="SMR" id="C1CIB8"/>
<dbReference type="KEGG" id="spp:SPP_0281"/>
<dbReference type="HOGENOM" id="CLU_032354_1_2_9"/>
<dbReference type="UniPathway" id="UPA00588">
    <property type="reaction ID" value="UER00649"/>
</dbReference>
<dbReference type="GO" id="GO:0005737">
    <property type="term" value="C:cytoplasm"/>
    <property type="evidence" value="ECO:0007669"/>
    <property type="project" value="UniProtKB-SubCell"/>
</dbReference>
<dbReference type="GO" id="GO:0004017">
    <property type="term" value="F:adenylate kinase activity"/>
    <property type="evidence" value="ECO:0007669"/>
    <property type="project" value="UniProtKB-UniRule"/>
</dbReference>
<dbReference type="GO" id="GO:0005524">
    <property type="term" value="F:ATP binding"/>
    <property type="evidence" value="ECO:0007669"/>
    <property type="project" value="UniProtKB-UniRule"/>
</dbReference>
<dbReference type="GO" id="GO:0044209">
    <property type="term" value="P:AMP salvage"/>
    <property type="evidence" value="ECO:0007669"/>
    <property type="project" value="UniProtKB-UniRule"/>
</dbReference>
<dbReference type="CDD" id="cd01428">
    <property type="entry name" value="ADK"/>
    <property type="match status" value="1"/>
</dbReference>
<dbReference type="FunFam" id="3.40.50.300:FF:000106">
    <property type="entry name" value="Adenylate kinase mitochondrial"/>
    <property type="match status" value="1"/>
</dbReference>
<dbReference type="Gene3D" id="3.40.50.300">
    <property type="entry name" value="P-loop containing nucleotide triphosphate hydrolases"/>
    <property type="match status" value="1"/>
</dbReference>
<dbReference type="HAMAP" id="MF_00235">
    <property type="entry name" value="Adenylate_kinase_Adk"/>
    <property type="match status" value="1"/>
</dbReference>
<dbReference type="InterPro" id="IPR006259">
    <property type="entry name" value="Adenyl_kin_sub"/>
</dbReference>
<dbReference type="InterPro" id="IPR000850">
    <property type="entry name" value="Adenylat/UMP-CMP_kin"/>
</dbReference>
<dbReference type="InterPro" id="IPR033690">
    <property type="entry name" value="Adenylat_kinase_CS"/>
</dbReference>
<dbReference type="InterPro" id="IPR027417">
    <property type="entry name" value="P-loop_NTPase"/>
</dbReference>
<dbReference type="NCBIfam" id="TIGR01351">
    <property type="entry name" value="adk"/>
    <property type="match status" value="1"/>
</dbReference>
<dbReference type="NCBIfam" id="NF001380">
    <property type="entry name" value="PRK00279.1-2"/>
    <property type="match status" value="1"/>
</dbReference>
<dbReference type="NCBIfam" id="NF001381">
    <property type="entry name" value="PRK00279.1-3"/>
    <property type="match status" value="1"/>
</dbReference>
<dbReference type="NCBIfam" id="NF001382">
    <property type="entry name" value="PRK00279.1-4"/>
    <property type="match status" value="1"/>
</dbReference>
<dbReference type="NCBIfam" id="NF011100">
    <property type="entry name" value="PRK14527.1"/>
    <property type="match status" value="1"/>
</dbReference>
<dbReference type="PANTHER" id="PTHR23359">
    <property type="entry name" value="NUCLEOTIDE KINASE"/>
    <property type="match status" value="1"/>
</dbReference>
<dbReference type="Pfam" id="PF00406">
    <property type="entry name" value="ADK"/>
    <property type="match status" value="1"/>
</dbReference>
<dbReference type="PRINTS" id="PR00094">
    <property type="entry name" value="ADENYLTKNASE"/>
</dbReference>
<dbReference type="SUPFAM" id="SSF52540">
    <property type="entry name" value="P-loop containing nucleoside triphosphate hydrolases"/>
    <property type="match status" value="1"/>
</dbReference>
<dbReference type="PROSITE" id="PS00113">
    <property type="entry name" value="ADENYLATE_KINASE"/>
    <property type="match status" value="1"/>
</dbReference>